<proteinExistence type="inferred from homology"/>
<reference key="1">
    <citation type="journal article" date="1986" name="Virology">
        <title>Epidemiology of influenza C virus in man: multiple evolutionary lineages and low rate of change.</title>
        <authorList>
            <person name="Buonagurio D.A."/>
            <person name="Nakada S."/>
            <person name="Fitch W.M."/>
            <person name="Palese P."/>
        </authorList>
    </citation>
    <scope>NUCLEOTIDE SEQUENCE [GENOMIC RNA]</scope>
</reference>
<protein>
    <recommendedName>
        <fullName>Nuclear export protein</fullName>
        <shortName>NEP</shortName>
    </recommendedName>
    <alternativeName>
        <fullName>Non-structural protein 2</fullName>
        <shortName>NS2</shortName>
    </alternativeName>
</protein>
<gene>
    <name type="primary">NS</name>
</gene>
<feature type="chain" id="PRO_0000223682" description="Nuclear export protein">
    <location>
        <begin position="1"/>
        <end position="177"/>
    </location>
</feature>
<feature type="short sequence motif" description="Nuclear export signal" evidence="1">
    <location>
        <begin position="91"/>
        <end position="100"/>
    </location>
</feature>
<feature type="short sequence motif" description="Nuclear export signal" evidence="1">
    <location>
        <begin position="117"/>
        <end position="127"/>
    </location>
</feature>
<feature type="non-terminal residue">
    <location>
        <position position="1"/>
    </location>
</feature>
<name>NEP_INCYA</name>
<evidence type="ECO:0000250" key="1"/>
<evidence type="ECO:0000305" key="2"/>
<keyword id="KW-0025">Alternative splicing</keyword>
<keyword id="KW-1048">Host nucleus</keyword>
<keyword id="KW-0945">Host-virus interaction</keyword>
<keyword id="KW-0813">Transport</keyword>
<keyword id="KW-0946">Virion</keyword>
<comment type="function">
    <text evidence="1">Mediates the nuclear export of encapsidated genomic RNAs (ribonucleoproteins, RNPs). Acts as an adapter between viral RNPs complexes and the nuclear export machinery of the cell. Possesses no intrinsic RNA-binding activity, but includes a C-terminal M1-binding domain. This domain is believed to allow recognition of RNPs to which the M1 protein is bound. Because the M1 protein is not available in large quantities until the later stages of infection, such an indirect recognition mechanism probably ensures that genomic RNPs are not exported from the nucleus before sufficient quantities of viral mRNA and progeny genomic RNA have been synthesized. Furthermore, the RNPs enters the cytoplasm only when they have associated with the M1 protein that is necessary to guide them to the plasma membrane. May down-regulate viral RNA synthesis when overproduced (By similarity).</text>
</comment>
<comment type="subunit">
    <text evidence="1">Binds M1 protein. May interact with human nucleoporins and exportin XPO1/CRM1 (By similarity).</text>
</comment>
<comment type="subcellular location">
    <subcellularLocation>
        <location evidence="2">Virion</location>
    </subcellularLocation>
    <subcellularLocation>
        <location evidence="1">Host nucleus</location>
    </subcellularLocation>
</comment>
<comment type="alternative products">
    <event type="alternative splicing"/>
    <isoform>
        <id>P0C142-1</id>
        <name>NEP</name>
        <name>NS2</name>
        <sequence type="displayed"/>
    </isoform>
    <isoform>
        <id>P0C141-1</id>
        <name>NS1</name>
        <sequence type="external"/>
    </isoform>
</comment>
<comment type="sequence caution" evidence="2">
    <conflict type="frameshift">
        <sequence resource="EMBL-CDS" id="BAA24043"/>
    </conflict>
</comment>
<organismHost>
    <name type="scientific">Homo sapiens</name>
    <name type="common">Human</name>
    <dbReference type="NCBI Taxonomy" id="9606"/>
</organismHost>
<organismHost>
    <name type="scientific">Sus scrofa</name>
    <name type="common">Pig</name>
    <dbReference type="NCBI Taxonomy" id="9823"/>
</organismHost>
<sequence length="177" mass="20271">VKSTNLMAFVATKMLERQEDLDTCTEMQVEKMKASTKARLRTESSFAPRTWEDAIKDEILRRSVDTSSLDRWPELKQELENVSDALKADSLWLPMKSLSLYSEVSNQEPSSIPIGEMKHQILTRLKLICSRLEKLDHNLSKAVLGIQNSEDLILIIYNRDICKNTILMIKSLCNSLI</sequence>
<accession>P0C142</accession>
<accession>P06825</accession>
<organism>
    <name type="scientific">Influenza C virus (strain C/Yamagata/10/1981)</name>
    <dbReference type="NCBI Taxonomy" id="11568"/>
    <lineage>
        <taxon>Viruses</taxon>
        <taxon>Riboviria</taxon>
        <taxon>Orthornavirae</taxon>
        <taxon>Negarnaviricota</taxon>
        <taxon>Polyploviricotina</taxon>
        <taxon>Insthoviricetes</taxon>
        <taxon>Articulavirales</taxon>
        <taxon>Orthomyxoviridae</taxon>
        <taxon>Gammainfluenzavirus</taxon>
        <taxon>Gammainfluenzavirus influenzae</taxon>
        <taxon>Influenza C virus</taxon>
    </lineage>
</organism>
<dbReference type="EMBL" id="D00033">
    <property type="protein sequence ID" value="BAA24043.1"/>
    <property type="status" value="ALT_FRAME"/>
    <property type="molecule type" value="Genomic_RNA"/>
</dbReference>
<dbReference type="SMR" id="P0C142"/>
<dbReference type="GO" id="GO:0042025">
    <property type="term" value="C:host cell nucleus"/>
    <property type="evidence" value="ECO:0007669"/>
    <property type="project" value="UniProtKB-SubCell"/>
</dbReference>
<dbReference type="GO" id="GO:0044423">
    <property type="term" value="C:virion component"/>
    <property type="evidence" value="ECO:0007669"/>
    <property type="project" value="UniProtKB-KW"/>
</dbReference>
<dbReference type="InterPro" id="IPR005188">
    <property type="entry name" value="Flu_C_NS2"/>
</dbReference>
<dbReference type="Pfam" id="PF03555">
    <property type="entry name" value="Flu_C_NS2"/>
    <property type="match status" value="1"/>
</dbReference>